<comment type="function">
    <text evidence="1">Required for accurate and efficient protein synthesis under certain stress conditions. May act as a fidelity factor of the translation reaction, by catalyzing a one-codon backward translocation of tRNAs on improperly translocated ribosomes. Back-translocation proceeds from a post-translocation (POST) complex to a pre-translocation (PRE) complex, thus giving elongation factor G a second chance to translocate the tRNAs correctly. Binds to ribosomes in a GTP-dependent manner.</text>
</comment>
<comment type="catalytic activity">
    <reaction evidence="1">
        <text>GTP + H2O = GDP + phosphate + H(+)</text>
        <dbReference type="Rhea" id="RHEA:19669"/>
        <dbReference type="ChEBI" id="CHEBI:15377"/>
        <dbReference type="ChEBI" id="CHEBI:15378"/>
        <dbReference type="ChEBI" id="CHEBI:37565"/>
        <dbReference type="ChEBI" id="CHEBI:43474"/>
        <dbReference type="ChEBI" id="CHEBI:58189"/>
        <dbReference type="EC" id="3.6.5.n1"/>
    </reaction>
</comment>
<comment type="subcellular location">
    <subcellularLocation>
        <location evidence="1">Cell membrane</location>
        <topology evidence="1">Peripheral membrane protein</topology>
        <orientation evidence="1">Cytoplasmic side</orientation>
    </subcellularLocation>
</comment>
<comment type="similarity">
    <text evidence="1">Belongs to the TRAFAC class translation factor GTPase superfamily. Classic translation factor GTPase family. LepA subfamily.</text>
</comment>
<accession>C1CR98</accession>
<dbReference type="EC" id="3.6.5.n1" evidence="1"/>
<dbReference type="EMBL" id="CP000921">
    <property type="protein sequence ID" value="ACO24026.1"/>
    <property type="molecule type" value="Genomic_DNA"/>
</dbReference>
<dbReference type="RefSeq" id="WP_001047216.1">
    <property type="nucleotide sequence ID" value="NC_012469.1"/>
</dbReference>
<dbReference type="SMR" id="C1CR98"/>
<dbReference type="KEGG" id="snt:SPT_1026"/>
<dbReference type="HOGENOM" id="CLU_009995_3_3_9"/>
<dbReference type="GO" id="GO:0005886">
    <property type="term" value="C:plasma membrane"/>
    <property type="evidence" value="ECO:0007669"/>
    <property type="project" value="UniProtKB-SubCell"/>
</dbReference>
<dbReference type="GO" id="GO:0005525">
    <property type="term" value="F:GTP binding"/>
    <property type="evidence" value="ECO:0007669"/>
    <property type="project" value="UniProtKB-UniRule"/>
</dbReference>
<dbReference type="GO" id="GO:0003924">
    <property type="term" value="F:GTPase activity"/>
    <property type="evidence" value="ECO:0007669"/>
    <property type="project" value="UniProtKB-UniRule"/>
</dbReference>
<dbReference type="GO" id="GO:0043022">
    <property type="term" value="F:ribosome binding"/>
    <property type="evidence" value="ECO:0007669"/>
    <property type="project" value="UniProtKB-UniRule"/>
</dbReference>
<dbReference type="GO" id="GO:0003746">
    <property type="term" value="F:translation elongation factor activity"/>
    <property type="evidence" value="ECO:0007669"/>
    <property type="project" value="UniProtKB-UniRule"/>
</dbReference>
<dbReference type="GO" id="GO:0045727">
    <property type="term" value="P:positive regulation of translation"/>
    <property type="evidence" value="ECO:0007669"/>
    <property type="project" value="UniProtKB-UniRule"/>
</dbReference>
<dbReference type="CDD" id="cd03699">
    <property type="entry name" value="EF4_II"/>
    <property type="match status" value="1"/>
</dbReference>
<dbReference type="CDD" id="cd16260">
    <property type="entry name" value="EF4_III"/>
    <property type="match status" value="1"/>
</dbReference>
<dbReference type="CDD" id="cd01890">
    <property type="entry name" value="LepA"/>
    <property type="match status" value="1"/>
</dbReference>
<dbReference type="CDD" id="cd03709">
    <property type="entry name" value="lepA_C"/>
    <property type="match status" value="1"/>
</dbReference>
<dbReference type="FunFam" id="3.40.50.300:FF:000078">
    <property type="entry name" value="Elongation factor 4"/>
    <property type="match status" value="1"/>
</dbReference>
<dbReference type="FunFam" id="2.40.30.10:FF:000015">
    <property type="entry name" value="Translation factor GUF1, mitochondrial"/>
    <property type="match status" value="1"/>
</dbReference>
<dbReference type="FunFam" id="3.30.70.240:FF:000007">
    <property type="entry name" value="Translation factor GUF1, mitochondrial"/>
    <property type="match status" value="1"/>
</dbReference>
<dbReference type="FunFam" id="3.30.70.2570:FF:000001">
    <property type="entry name" value="Translation factor GUF1, mitochondrial"/>
    <property type="match status" value="1"/>
</dbReference>
<dbReference type="FunFam" id="3.30.70.870:FF:000004">
    <property type="entry name" value="Translation factor GUF1, mitochondrial"/>
    <property type="match status" value="1"/>
</dbReference>
<dbReference type="Gene3D" id="3.30.70.240">
    <property type="match status" value="1"/>
</dbReference>
<dbReference type="Gene3D" id="3.30.70.2570">
    <property type="entry name" value="Elongation factor 4, C-terminal domain"/>
    <property type="match status" value="1"/>
</dbReference>
<dbReference type="Gene3D" id="3.30.70.870">
    <property type="entry name" value="Elongation Factor G (Translational Gtpase), domain 3"/>
    <property type="match status" value="1"/>
</dbReference>
<dbReference type="Gene3D" id="3.40.50.300">
    <property type="entry name" value="P-loop containing nucleotide triphosphate hydrolases"/>
    <property type="match status" value="1"/>
</dbReference>
<dbReference type="Gene3D" id="2.40.30.10">
    <property type="entry name" value="Translation factors"/>
    <property type="match status" value="1"/>
</dbReference>
<dbReference type="HAMAP" id="MF_00071">
    <property type="entry name" value="LepA"/>
    <property type="match status" value="1"/>
</dbReference>
<dbReference type="InterPro" id="IPR006297">
    <property type="entry name" value="EF-4"/>
</dbReference>
<dbReference type="InterPro" id="IPR035647">
    <property type="entry name" value="EFG_III/V"/>
</dbReference>
<dbReference type="InterPro" id="IPR000640">
    <property type="entry name" value="EFG_V-like"/>
</dbReference>
<dbReference type="InterPro" id="IPR004161">
    <property type="entry name" value="EFTu-like_2"/>
</dbReference>
<dbReference type="InterPro" id="IPR031157">
    <property type="entry name" value="G_TR_CS"/>
</dbReference>
<dbReference type="InterPro" id="IPR038363">
    <property type="entry name" value="LepA_C_sf"/>
</dbReference>
<dbReference type="InterPro" id="IPR013842">
    <property type="entry name" value="LepA_CTD"/>
</dbReference>
<dbReference type="InterPro" id="IPR035654">
    <property type="entry name" value="LepA_IV"/>
</dbReference>
<dbReference type="InterPro" id="IPR027417">
    <property type="entry name" value="P-loop_NTPase"/>
</dbReference>
<dbReference type="InterPro" id="IPR005225">
    <property type="entry name" value="Small_GTP-bd"/>
</dbReference>
<dbReference type="InterPro" id="IPR000795">
    <property type="entry name" value="T_Tr_GTP-bd_dom"/>
</dbReference>
<dbReference type="InterPro" id="IPR009000">
    <property type="entry name" value="Transl_B-barrel_sf"/>
</dbReference>
<dbReference type="NCBIfam" id="TIGR01393">
    <property type="entry name" value="lepA"/>
    <property type="match status" value="1"/>
</dbReference>
<dbReference type="NCBIfam" id="TIGR00231">
    <property type="entry name" value="small_GTP"/>
    <property type="match status" value="1"/>
</dbReference>
<dbReference type="PANTHER" id="PTHR43512:SF4">
    <property type="entry name" value="TRANSLATION FACTOR GUF1 HOMOLOG, CHLOROPLASTIC"/>
    <property type="match status" value="1"/>
</dbReference>
<dbReference type="PANTHER" id="PTHR43512">
    <property type="entry name" value="TRANSLATION FACTOR GUF1-RELATED"/>
    <property type="match status" value="1"/>
</dbReference>
<dbReference type="Pfam" id="PF00679">
    <property type="entry name" value="EFG_C"/>
    <property type="match status" value="1"/>
</dbReference>
<dbReference type="Pfam" id="PF00009">
    <property type="entry name" value="GTP_EFTU"/>
    <property type="match status" value="1"/>
</dbReference>
<dbReference type="Pfam" id="PF03144">
    <property type="entry name" value="GTP_EFTU_D2"/>
    <property type="match status" value="1"/>
</dbReference>
<dbReference type="Pfam" id="PF06421">
    <property type="entry name" value="LepA_C"/>
    <property type="match status" value="1"/>
</dbReference>
<dbReference type="PRINTS" id="PR00315">
    <property type="entry name" value="ELONGATNFCT"/>
</dbReference>
<dbReference type="SMART" id="SM00838">
    <property type="entry name" value="EFG_C"/>
    <property type="match status" value="1"/>
</dbReference>
<dbReference type="SUPFAM" id="SSF54980">
    <property type="entry name" value="EF-G C-terminal domain-like"/>
    <property type="match status" value="2"/>
</dbReference>
<dbReference type="SUPFAM" id="SSF52540">
    <property type="entry name" value="P-loop containing nucleoside triphosphate hydrolases"/>
    <property type="match status" value="1"/>
</dbReference>
<dbReference type="SUPFAM" id="SSF50447">
    <property type="entry name" value="Translation proteins"/>
    <property type="match status" value="1"/>
</dbReference>
<dbReference type="PROSITE" id="PS00301">
    <property type="entry name" value="G_TR_1"/>
    <property type="match status" value="1"/>
</dbReference>
<dbReference type="PROSITE" id="PS51722">
    <property type="entry name" value="G_TR_2"/>
    <property type="match status" value="1"/>
</dbReference>
<reference key="1">
    <citation type="journal article" date="2010" name="Genome Biol.">
        <title>Structure and dynamics of the pan-genome of Streptococcus pneumoniae and closely related species.</title>
        <authorList>
            <person name="Donati C."/>
            <person name="Hiller N.L."/>
            <person name="Tettelin H."/>
            <person name="Muzzi A."/>
            <person name="Croucher N.J."/>
            <person name="Angiuoli S.V."/>
            <person name="Oggioni M."/>
            <person name="Dunning Hotopp J.C."/>
            <person name="Hu F.Z."/>
            <person name="Riley D.R."/>
            <person name="Covacci A."/>
            <person name="Mitchell T.J."/>
            <person name="Bentley S.D."/>
            <person name="Kilian M."/>
            <person name="Ehrlich G.D."/>
            <person name="Rappuoli R."/>
            <person name="Moxon E.R."/>
            <person name="Masignani V."/>
        </authorList>
    </citation>
    <scope>NUCLEOTIDE SEQUENCE [LARGE SCALE GENOMIC DNA]</scope>
    <source>
        <strain>Taiwan19F-14</strain>
    </source>
</reference>
<proteinExistence type="inferred from homology"/>
<protein>
    <recommendedName>
        <fullName evidence="1">Elongation factor 4</fullName>
        <shortName evidence="1">EF-4</shortName>
        <ecNumber evidence="1">3.6.5.n1</ecNumber>
    </recommendedName>
    <alternativeName>
        <fullName evidence="1">Ribosomal back-translocase LepA</fullName>
    </alternativeName>
</protein>
<gene>
    <name evidence="1" type="primary">lepA</name>
    <name type="ordered locus">SPT_1026</name>
</gene>
<name>LEPA_STRZT</name>
<organism>
    <name type="scientific">Streptococcus pneumoniae (strain Taiwan19F-14)</name>
    <dbReference type="NCBI Taxonomy" id="487213"/>
    <lineage>
        <taxon>Bacteria</taxon>
        <taxon>Bacillati</taxon>
        <taxon>Bacillota</taxon>
        <taxon>Bacilli</taxon>
        <taxon>Lactobacillales</taxon>
        <taxon>Streptococcaceae</taxon>
        <taxon>Streptococcus</taxon>
    </lineage>
</organism>
<sequence length="607" mass="67609">MNLEELKKRQGKIRNFSIIAHIDHGKSTLADRILEKTETVSSREMQAQLLDSMDLERERGITIKLNAIELNYTAKDGETYIFHLIDTPGHVDFTYEVSRSLAACEGAILVVDAAQGIEAQTLANVYLALDNDLEIMPIINKIDLPAADPERVRTEIEDVIGLDASEAVLASAKAGIGIEEILEQIVEKVPAPTGDVTAPLKALIFDSVYDAYRGVILQVRVMDGVVKPGDKIQLMSNSKTFDVAEVGIFTPKAVGRDFLATGDVGYIAASIKTVQDTRVGDTVTLATNPAAEPLHGYKQMNPMVFAGLYPIESNKYNDLREALEKLQLNDASLQFEPETSQALGFGFRCGFLGLLHMDVIQERLEREFNIDLIMTAPSVIYKVNLTDGESMDVSNPSEFPDPTKIATIEEPYVKAQIMVPQEFVGAVMELAQRKRGDFVTMDYIDDNRVNVIYQIPLAEIVFDFFDKLKSSTRGYASFDYELSEYRPSKLVKMDILLNGDKVDALSFIVHKDFAYERGKLIVDKLKKIIPRQQFEVPIQAAIGHKIVARTDIKALRKNVLAKCYGGDVSRKRKLLEKQKAGKKRMKSIGSVEVPQEAFLSVLSMDEE</sequence>
<evidence type="ECO:0000255" key="1">
    <source>
        <dbReference type="HAMAP-Rule" id="MF_00071"/>
    </source>
</evidence>
<keyword id="KW-1003">Cell membrane</keyword>
<keyword id="KW-0342">GTP-binding</keyword>
<keyword id="KW-0378">Hydrolase</keyword>
<keyword id="KW-0472">Membrane</keyword>
<keyword id="KW-0547">Nucleotide-binding</keyword>
<keyword id="KW-0648">Protein biosynthesis</keyword>
<feature type="chain" id="PRO_1000190834" description="Elongation factor 4">
    <location>
        <begin position="1"/>
        <end position="607"/>
    </location>
</feature>
<feature type="domain" description="tr-type G">
    <location>
        <begin position="11"/>
        <end position="193"/>
    </location>
</feature>
<feature type="binding site" evidence="1">
    <location>
        <begin position="23"/>
        <end position="28"/>
    </location>
    <ligand>
        <name>GTP</name>
        <dbReference type="ChEBI" id="CHEBI:37565"/>
    </ligand>
</feature>
<feature type="binding site" evidence="1">
    <location>
        <begin position="140"/>
        <end position="143"/>
    </location>
    <ligand>
        <name>GTP</name>
        <dbReference type="ChEBI" id="CHEBI:37565"/>
    </ligand>
</feature>